<sequence>MLRAVARCCGHWPPGAAAADGMLWQTELRPHAAGEFSMAAAQANLAMEDQAQVLASPAATLVGVYDGHGGADASRFLRSRLFPHVQRFEKEQGGMSTEVIRRAFGAAEEEFLQQVRQAWRQRPKMAAVGSCCLLGAISGDTLYVANLGDSRAVLGRRVVGGGVAVAERLTDEHNAASEEVRRELTALNPDDAQIVVHARGAWRVKGIIQVSRTIGDVYLKKQEYSMDPVFRNVGPPIPLKRPALSAEPSIQVRKLKPNDLFLIFASDGLWEHLSDDAAVQIVFKNPRTGIANRLVKAALKEATRKREVSFRDLKTIEKGVRRHFHDDISVIVVYLDRHRGRRHTRVVDSSSNCTNAPVDIYSSNSGQSVETLQAHRGSGW</sequence>
<keyword id="KW-0025">Alternative splicing</keyword>
<keyword id="KW-0378">Hydrolase</keyword>
<keyword id="KW-0460">Magnesium</keyword>
<keyword id="KW-0464">Manganese</keyword>
<keyword id="KW-0479">Metal-binding</keyword>
<keyword id="KW-0904">Protein phosphatase</keyword>
<keyword id="KW-1185">Reference proteome</keyword>
<comment type="catalytic activity">
    <reaction>
        <text>O-phospho-L-seryl-[protein] + H2O = L-seryl-[protein] + phosphate</text>
        <dbReference type="Rhea" id="RHEA:20629"/>
        <dbReference type="Rhea" id="RHEA-COMP:9863"/>
        <dbReference type="Rhea" id="RHEA-COMP:11604"/>
        <dbReference type="ChEBI" id="CHEBI:15377"/>
        <dbReference type="ChEBI" id="CHEBI:29999"/>
        <dbReference type="ChEBI" id="CHEBI:43474"/>
        <dbReference type="ChEBI" id="CHEBI:83421"/>
        <dbReference type="EC" id="3.1.3.16"/>
    </reaction>
</comment>
<comment type="catalytic activity">
    <reaction>
        <text>O-phospho-L-threonyl-[protein] + H2O = L-threonyl-[protein] + phosphate</text>
        <dbReference type="Rhea" id="RHEA:47004"/>
        <dbReference type="Rhea" id="RHEA-COMP:11060"/>
        <dbReference type="Rhea" id="RHEA-COMP:11605"/>
        <dbReference type="ChEBI" id="CHEBI:15377"/>
        <dbReference type="ChEBI" id="CHEBI:30013"/>
        <dbReference type="ChEBI" id="CHEBI:43474"/>
        <dbReference type="ChEBI" id="CHEBI:61977"/>
        <dbReference type="EC" id="3.1.3.16"/>
    </reaction>
</comment>
<comment type="cofactor">
    <cofactor evidence="1">
        <name>Mg(2+)</name>
        <dbReference type="ChEBI" id="CHEBI:18420"/>
    </cofactor>
    <cofactor evidence="1">
        <name>Mn(2+)</name>
        <dbReference type="ChEBI" id="CHEBI:29035"/>
    </cofactor>
    <text evidence="1">Binds 2 magnesium or manganese ions per subunit.</text>
</comment>
<comment type="alternative products">
    <event type="alternative splicing"/>
    <isoform>
        <id>Q5MFV5-1</id>
        <name>1</name>
        <sequence type="displayed"/>
    </isoform>
    <isoform>
        <id>Q5MFV5-2</id>
        <name>2</name>
        <sequence type="described" ref="VSP_036261 VSP_036262"/>
    </isoform>
    <isoform>
        <id>Q5MFV5-3</id>
        <name>3</name>
        <sequence type="described" ref="VSP_036259 VSP_036260"/>
    </isoform>
</comment>
<comment type="induction">
    <text evidence="3">By benzothiadiazole (BTH).</text>
</comment>
<comment type="similarity">
    <text evidence="5">Belongs to the PP2C family.</text>
</comment>
<proteinExistence type="evidence at transcript level"/>
<organism>
    <name type="scientific">Oryza sativa subsp. indica</name>
    <name type="common">Rice</name>
    <dbReference type="NCBI Taxonomy" id="39946"/>
    <lineage>
        <taxon>Eukaryota</taxon>
        <taxon>Viridiplantae</taxon>
        <taxon>Streptophyta</taxon>
        <taxon>Embryophyta</taxon>
        <taxon>Tracheophyta</taxon>
        <taxon>Spermatophyta</taxon>
        <taxon>Magnoliopsida</taxon>
        <taxon>Liliopsida</taxon>
        <taxon>Poales</taxon>
        <taxon>Poaceae</taxon>
        <taxon>BOP clade</taxon>
        <taxon>Oryzoideae</taxon>
        <taxon>Oryzeae</taxon>
        <taxon>Oryzinae</taxon>
        <taxon>Oryza</taxon>
        <taxon>Oryza sativa</taxon>
    </lineage>
</organism>
<name>P2C34_ORYSI</name>
<dbReference type="EC" id="3.1.3.16"/>
<dbReference type="EMBL" id="AY831390">
    <property type="protein sequence ID" value="AAW29521.1"/>
    <property type="molecule type" value="mRNA"/>
</dbReference>
<dbReference type="EMBL" id="AY831391">
    <property type="protein sequence ID" value="AAW29522.1"/>
    <property type="molecule type" value="mRNA"/>
</dbReference>
<dbReference type="EMBL" id="CM000128">
    <property type="status" value="NOT_ANNOTATED_CDS"/>
    <property type="molecule type" value="Genomic_DNA"/>
</dbReference>
<dbReference type="SMR" id="Q5MFV5"/>
<dbReference type="STRING" id="39946.Q5MFV5"/>
<dbReference type="EnsemblPlants" id="BGIOSGA009773-TA">
    <molecule id="Q5MFV5-1"/>
    <property type="protein sequence ID" value="BGIOSGA009773-PA"/>
    <property type="gene ID" value="BGIOSGA009773"/>
</dbReference>
<dbReference type="EnsemblPlants" id="OsLima_03g0035440.01">
    <molecule id="Q5MFV5-1"/>
    <property type="protein sequence ID" value="OsLima_03g0035440.01"/>
    <property type="gene ID" value="OsLima_03g0035440"/>
</dbReference>
<dbReference type="Gramene" id="BGIOSGA009773-TA">
    <molecule id="Q5MFV5-1"/>
    <property type="protein sequence ID" value="BGIOSGA009773-PA"/>
    <property type="gene ID" value="BGIOSGA009773"/>
</dbReference>
<dbReference type="Gramene" id="OsLima_03g0035440.01">
    <molecule id="Q5MFV5-1"/>
    <property type="protein sequence ID" value="OsLima_03g0035440.01"/>
    <property type="gene ID" value="OsLima_03g0035440"/>
</dbReference>
<dbReference type="HOGENOM" id="CLU_013173_2_2_1"/>
<dbReference type="OMA" id="AQANLIM"/>
<dbReference type="Proteomes" id="UP000007015">
    <property type="component" value="Chromosome 3"/>
</dbReference>
<dbReference type="ExpressionAtlas" id="Q5MFV5">
    <property type="expression patterns" value="differential"/>
</dbReference>
<dbReference type="GO" id="GO:0046872">
    <property type="term" value="F:metal ion binding"/>
    <property type="evidence" value="ECO:0007669"/>
    <property type="project" value="UniProtKB-KW"/>
</dbReference>
<dbReference type="GO" id="GO:0004722">
    <property type="term" value="F:protein serine/threonine phosphatase activity"/>
    <property type="evidence" value="ECO:0007669"/>
    <property type="project" value="UniProtKB-EC"/>
</dbReference>
<dbReference type="CDD" id="cd00143">
    <property type="entry name" value="PP2Cc"/>
    <property type="match status" value="1"/>
</dbReference>
<dbReference type="FunFam" id="3.60.40.10:FF:000052">
    <property type="entry name" value="Probable protein phosphatase 2C 34"/>
    <property type="match status" value="1"/>
</dbReference>
<dbReference type="Gene3D" id="3.60.40.10">
    <property type="entry name" value="PPM-type phosphatase domain"/>
    <property type="match status" value="1"/>
</dbReference>
<dbReference type="InterPro" id="IPR015655">
    <property type="entry name" value="PP2C"/>
</dbReference>
<dbReference type="InterPro" id="IPR000222">
    <property type="entry name" value="PP2C_BS"/>
</dbReference>
<dbReference type="InterPro" id="IPR036457">
    <property type="entry name" value="PPM-type-like_dom_sf"/>
</dbReference>
<dbReference type="InterPro" id="IPR001932">
    <property type="entry name" value="PPM-type_phosphatase-like_dom"/>
</dbReference>
<dbReference type="PANTHER" id="PTHR47992">
    <property type="entry name" value="PROTEIN PHOSPHATASE"/>
    <property type="match status" value="1"/>
</dbReference>
<dbReference type="Pfam" id="PF00481">
    <property type="entry name" value="PP2C"/>
    <property type="match status" value="1"/>
</dbReference>
<dbReference type="SMART" id="SM00332">
    <property type="entry name" value="PP2Cc"/>
    <property type="match status" value="1"/>
</dbReference>
<dbReference type="SUPFAM" id="SSF81606">
    <property type="entry name" value="PP2C-like"/>
    <property type="match status" value="1"/>
</dbReference>
<dbReference type="PROSITE" id="PS01032">
    <property type="entry name" value="PPM_1"/>
    <property type="match status" value="1"/>
</dbReference>
<dbReference type="PROSITE" id="PS51746">
    <property type="entry name" value="PPM_2"/>
    <property type="match status" value="1"/>
</dbReference>
<evidence type="ECO:0000250" key="1"/>
<evidence type="ECO:0000255" key="2">
    <source>
        <dbReference type="PROSITE-ProRule" id="PRU01082"/>
    </source>
</evidence>
<evidence type="ECO:0000269" key="3">
    <source>
    </source>
</evidence>
<evidence type="ECO:0000303" key="4">
    <source>
    </source>
</evidence>
<evidence type="ECO:0000305" key="5"/>
<accession>Q5MFV5</accession>
<accession>A2XM81</accession>
<accession>Q5MFV4</accession>
<gene>
    <name type="primary">BIPP2C2</name>
    <name type="ORF">OsI_013174</name>
</gene>
<reference key="1">
    <citation type="journal article" date="2006" name="J. Plant Physiol.">
        <title>Molecular characterization of four rice genes encoding ethylene-responsive transcriptional factors and their expressions in response to biotic and abiotic stress.</title>
        <authorList>
            <person name="Cao Y."/>
            <person name="Song F."/>
            <person name="Goodman R.M."/>
            <person name="Zheng Z."/>
        </authorList>
    </citation>
    <scope>NUCLEOTIDE SEQUENCE [MRNA] (ISOFORMS 1 AND 3)</scope>
    <scope>INDUCTION</scope>
    <source>
        <strain>cv. Yuanfengzao</strain>
        <tissue>Seedling</tissue>
    </source>
</reference>
<reference key="2">
    <citation type="journal article" date="2005" name="PLoS Biol.">
        <title>The genomes of Oryza sativa: a history of duplications.</title>
        <authorList>
            <person name="Yu J."/>
            <person name="Wang J."/>
            <person name="Lin W."/>
            <person name="Li S."/>
            <person name="Li H."/>
            <person name="Zhou J."/>
            <person name="Ni P."/>
            <person name="Dong W."/>
            <person name="Hu S."/>
            <person name="Zeng C."/>
            <person name="Zhang J."/>
            <person name="Zhang Y."/>
            <person name="Li R."/>
            <person name="Xu Z."/>
            <person name="Li S."/>
            <person name="Li X."/>
            <person name="Zheng H."/>
            <person name="Cong L."/>
            <person name="Lin L."/>
            <person name="Yin J."/>
            <person name="Geng J."/>
            <person name="Li G."/>
            <person name="Shi J."/>
            <person name="Liu J."/>
            <person name="Lv H."/>
            <person name="Li J."/>
            <person name="Wang J."/>
            <person name="Deng Y."/>
            <person name="Ran L."/>
            <person name="Shi X."/>
            <person name="Wang X."/>
            <person name="Wu Q."/>
            <person name="Li C."/>
            <person name="Ren X."/>
            <person name="Wang J."/>
            <person name="Wang X."/>
            <person name="Li D."/>
            <person name="Liu D."/>
            <person name="Zhang X."/>
            <person name="Ji Z."/>
            <person name="Zhao W."/>
            <person name="Sun Y."/>
            <person name="Zhang Z."/>
            <person name="Bao J."/>
            <person name="Han Y."/>
            <person name="Dong L."/>
            <person name="Ji J."/>
            <person name="Chen P."/>
            <person name="Wu S."/>
            <person name="Liu J."/>
            <person name="Xiao Y."/>
            <person name="Bu D."/>
            <person name="Tan J."/>
            <person name="Yang L."/>
            <person name="Ye C."/>
            <person name="Zhang J."/>
            <person name="Xu J."/>
            <person name="Zhou Y."/>
            <person name="Yu Y."/>
            <person name="Zhang B."/>
            <person name="Zhuang S."/>
            <person name="Wei H."/>
            <person name="Liu B."/>
            <person name="Lei M."/>
            <person name="Yu H."/>
            <person name="Li Y."/>
            <person name="Xu H."/>
            <person name="Wei S."/>
            <person name="He X."/>
            <person name="Fang L."/>
            <person name="Zhang Z."/>
            <person name="Zhang Y."/>
            <person name="Huang X."/>
            <person name="Su Z."/>
            <person name="Tong W."/>
            <person name="Li J."/>
            <person name="Tong Z."/>
            <person name="Li S."/>
            <person name="Ye J."/>
            <person name="Wang L."/>
            <person name="Fang L."/>
            <person name="Lei T."/>
            <person name="Chen C.-S."/>
            <person name="Chen H.-C."/>
            <person name="Xu Z."/>
            <person name="Li H."/>
            <person name="Huang H."/>
            <person name="Zhang F."/>
            <person name="Xu H."/>
            <person name="Li N."/>
            <person name="Zhao C."/>
            <person name="Li S."/>
            <person name="Dong L."/>
            <person name="Huang Y."/>
            <person name="Li L."/>
            <person name="Xi Y."/>
            <person name="Qi Q."/>
            <person name="Li W."/>
            <person name="Zhang B."/>
            <person name="Hu W."/>
            <person name="Zhang Y."/>
            <person name="Tian X."/>
            <person name="Jiao Y."/>
            <person name="Liang X."/>
            <person name="Jin J."/>
            <person name="Gao L."/>
            <person name="Zheng W."/>
            <person name="Hao B."/>
            <person name="Liu S.-M."/>
            <person name="Wang W."/>
            <person name="Yuan L."/>
            <person name="Cao M."/>
            <person name="McDermott J."/>
            <person name="Samudrala R."/>
            <person name="Wang J."/>
            <person name="Wong G.K.-S."/>
            <person name="Yang H."/>
        </authorList>
    </citation>
    <scope>NUCLEOTIDE SEQUENCE [LARGE SCALE GENOMIC DNA]</scope>
    <source>
        <strain>cv. 93-11</strain>
    </source>
</reference>
<reference key="3">
    <citation type="journal article" date="2008" name="BMC Genomics">
        <title>Genome-wide and expression analysis of protein phosphatase 2C in rice and Arabidopsis.</title>
        <authorList>
            <person name="Xue T."/>
            <person name="Wang D."/>
            <person name="Zhang S."/>
            <person name="Ehlting J."/>
            <person name="Ni F."/>
            <person name="Jacab S."/>
            <person name="Zheng C."/>
            <person name="Zhong Y."/>
        </authorList>
    </citation>
    <scope>GENE FAMILY</scope>
    <scope>NOMENCLATURE</scope>
</reference>
<protein>
    <recommendedName>
        <fullName>Probable protein phosphatase 2C 34</fullName>
        <shortName>OsPP2C34</shortName>
        <ecNumber>3.1.3.16</ecNumber>
    </recommendedName>
    <alternativeName>
        <fullName>BTH-induced protein phosphatase 2C 2</fullName>
        <shortName>OsBIPP2C2</shortName>
    </alternativeName>
</protein>
<feature type="chain" id="PRO_0000363280" description="Probable protein phosphatase 2C 34">
    <location>
        <begin position="1"/>
        <end position="380"/>
    </location>
</feature>
<feature type="domain" description="PPM-type phosphatase" evidence="2">
    <location>
        <begin position="32"/>
        <end position="335"/>
    </location>
</feature>
<feature type="binding site" evidence="1">
    <location>
        <position position="66"/>
    </location>
    <ligand>
        <name>Mn(2+)</name>
        <dbReference type="ChEBI" id="CHEBI:29035"/>
        <label>1</label>
    </ligand>
</feature>
<feature type="binding site" evidence="1">
    <location>
        <position position="66"/>
    </location>
    <ligand>
        <name>Mn(2+)</name>
        <dbReference type="ChEBI" id="CHEBI:29035"/>
        <label>2</label>
    </ligand>
</feature>
<feature type="binding site" evidence="1">
    <location>
        <position position="67"/>
    </location>
    <ligand>
        <name>Mn(2+)</name>
        <dbReference type="ChEBI" id="CHEBI:29035"/>
        <label>1</label>
    </ligand>
</feature>
<feature type="binding site" evidence="1">
    <location>
        <position position="267"/>
    </location>
    <ligand>
        <name>Mn(2+)</name>
        <dbReference type="ChEBI" id="CHEBI:29035"/>
        <label>2</label>
    </ligand>
</feature>
<feature type="binding site" evidence="1">
    <location>
        <position position="326"/>
    </location>
    <ligand>
        <name>Mn(2+)</name>
        <dbReference type="ChEBI" id="CHEBI:29035"/>
        <label>2</label>
    </ligand>
</feature>
<feature type="splice variant" id="VSP_036259" description="In isoform 3." evidence="4">
    <original>VGPPIPLKRPALSAEPSIQVRKL</original>
    <variation>MVSGSISVTTLRCRLSSRIQGRV</variation>
    <location>
        <begin position="233"/>
        <end position="255"/>
    </location>
</feature>
<feature type="splice variant" id="VSP_036260" description="In isoform 3." evidence="4">
    <location>
        <begin position="256"/>
        <end position="380"/>
    </location>
</feature>
<feature type="splice variant" id="VSP_036261" description="In isoform 2." evidence="5">
    <original>TGIANRLVKAALKEATRKREVSFRDLKTIE</original>
    <variation>TVSSDNIYSIRSFHHREYIFPVNERGVLTQ</variation>
    <location>
        <begin position="288"/>
        <end position="317"/>
    </location>
</feature>
<feature type="splice variant" id="VSP_036262" description="In isoform 2." evidence="5">
    <location>
        <begin position="318"/>
        <end position="380"/>
    </location>
</feature>
<feature type="sequence conflict" description="In Ref. 1; AAW29521/AAW29522." evidence="5" ref="1">
    <original>H</original>
    <variation>L</variation>
    <location>
        <position position="84"/>
    </location>
</feature>
<feature type="sequence conflict" description="In Ref. 1; AAW29521/AAW29522." evidence="5" ref="1">
    <original>A</original>
    <variation>T</variation>
    <location>
        <position position="175"/>
    </location>
</feature>